<organism>
    <name type="scientific">Archaeoglobus fulgidus (strain ATCC 49558 / DSM 4304 / JCM 9628 / NBRC 100126 / VC-16)</name>
    <dbReference type="NCBI Taxonomy" id="224325"/>
    <lineage>
        <taxon>Archaea</taxon>
        <taxon>Methanobacteriati</taxon>
        <taxon>Methanobacteriota</taxon>
        <taxon>Archaeoglobi</taxon>
        <taxon>Archaeoglobales</taxon>
        <taxon>Archaeoglobaceae</taxon>
        <taxon>Archaeoglobus</taxon>
    </lineage>
</organism>
<protein>
    <recommendedName>
        <fullName>Uncharacterized protein AF_1269</fullName>
    </recommendedName>
</protein>
<sequence>MISEYGVVVIADRDESSWDFVEKRIDFSEFPLIES</sequence>
<reference key="1">
    <citation type="journal article" date="1997" name="Nature">
        <title>The complete genome sequence of the hyperthermophilic, sulphate-reducing archaeon Archaeoglobus fulgidus.</title>
        <authorList>
            <person name="Klenk H.-P."/>
            <person name="Clayton R.A."/>
            <person name="Tomb J.-F."/>
            <person name="White O."/>
            <person name="Nelson K.E."/>
            <person name="Ketchum K.A."/>
            <person name="Dodson R.J."/>
            <person name="Gwinn M.L."/>
            <person name="Hickey E.K."/>
            <person name="Peterson J.D."/>
            <person name="Richardson D.L."/>
            <person name="Kerlavage A.R."/>
            <person name="Graham D.E."/>
            <person name="Kyrpides N.C."/>
            <person name="Fleischmann R.D."/>
            <person name="Quackenbush J."/>
            <person name="Lee N.H."/>
            <person name="Sutton G.G."/>
            <person name="Gill S.R."/>
            <person name="Kirkness E.F."/>
            <person name="Dougherty B.A."/>
            <person name="McKenney K."/>
            <person name="Adams M.D."/>
            <person name="Loftus B.J."/>
            <person name="Peterson S.N."/>
            <person name="Reich C.I."/>
            <person name="McNeil L.K."/>
            <person name="Badger J.H."/>
            <person name="Glodek A."/>
            <person name="Zhou L."/>
            <person name="Overbeek R."/>
            <person name="Gocayne J.D."/>
            <person name="Weidman J.F."/>
            <person name="McDonald L.A."/>
            <person name="Utterback T.R."/>
            <person name="Cotton M.D."/>
            <person name="Spriggs T."/>
            <person name="Artiach P."/>
            <person name="Kaine B.P."/>
            <person name="Sykes S.M."/>
            <person name="Sadow P.W."/>
            <person name="D'Andrea K.P."/>
            <person name="Bowman C."/>
            <person name="Fujii C."/>
            <person name="Garland S.A."/>
            <person name="Mason T.M."/>
            <person name="Olsen G.J."/>
            <person name="Fraser C.M."/>
            <person name="Smith H.O."/>
            <person name="Woese C.R."/>
            <person name="Venter J.C."/>
        </authorList>
    </citation>
    <scope>NUCLEOTIDE SEQUENCE [LARGE SCALE GENOMIC DNA]</scope>
    <source>
        <strain>ATCC 49558 / DSM 4304 / JCM 9628 / NBRC 100126 / VC-16</strain>
    </source>
</reference>
<dbReference type="EMBL" id="AE000782">
    <property type="protein sequence ID" value="AAB89978.1"/>
    <property type="molecule type" value="Genomic_DNA"/>
</dbReference>
<dbReference type="PIR" id="D69408">
    <property type="entry name" value="D69408"/>
</dbReference>
<dbReference type="STRING" id="224325.AF_1269"/>
<dbReference type="PaxDb" id="224325-AF_1269"/>
<dbReference type="EnsemblBacteria" id="AAB89978">
    <property type="protein sequence ID" value="AAB89978"/>
    <property type="gene ID" value="AF_1269"/>
</dbReference>
<dbReference type="KEGG" id="afu:AF_1269"/>
<dbReference type="HOGENOM" id="CLU_3362463_0_0_2"/>
<dbReference type="Proteomes" id="UP000002199">
    <property type="component" value="Chromosome"/>
</dbReference>
<feature type="chain" id="PRO_0000127981" description="Uncharacterized protein AF_1269">
    <location>
        <begin position="1"/>
        <end position="35"/>
    </location>
</feature>
<accession>O28999</accession>
<keyword id="KW-1185">Reference proteome</keyword>
<proteinExistence type="predicted"/>
<name>Y1269_ARCFU</name>
<gene>
    <name type="ordered locus">AF_1269</name>
</gene>